<accession>P0DA06</accession>
<accession>Q879P3</accession>
<accession>Q8K8T1</accession>
<protein>
    <recommendedName>
        <fullName evidence="1">V-type ATP synthase alpha chain</fullName>
        <ecNumber evidence="1">7.1.2.2</ecNumber>
    </recommendedName>
    <alternativeName>
        <fullName evidence="1">V-ATPase subunit A</fullName>
    </alternativeName>
</protein>
<reference key="1">
    <citation type="journal article" date="2002" name="Proc. Natl. Acad. Sci. U.S.A.">
        <title>Genome sequence of a serotype M3 strain of group A Streptococcus: phage-encoded toxins, the high-virulence phenotype, and clone emergence.</title>
        <authorList>
            <person name="Beres S.B."/>
            <person name="Sylva G.L."/>
            <person name="Barbian K.D."/>
            <person name="Lei B."/>
            <person name="Hoff J.S."/>
            <person name="Mammarella N.D."/>
            <person name="Liu M.-Y."/>
            <person name="Smoot J.C."/>
            <person name="Porcella S.F."/>
            <person name="Parkins L.D."/>
            <person name="Campbell D.S."/>
            <person name="Smith T.M."/>
            <person name="McCormick J.K."/>
            <person name="Leung D.Y.M."/>
            <person name="Schlievert P.M."/>
            <person name="Musser J.M."/>
        </authorList>
    </citation>
    <scope>NUCLEOTIDE SEQUENCE [LARGE SCALE GENOMIC DNA]</scope>
    <source>
        <strain>ATCC BAA-595 / MGAS315</strain>
    </source>
</reference>
<feature type="chain" id="PRO_0000144616" description="V-type ATP synthase alpha chain">
    <location>
        <begin position="1"/>
        <end position="591"/>
    </location>
</feature>
<feature type="binding site" evidence="1">
    <location>
        <begin position="233"/>
        <end position="240"/>
    </location>
    <ligand>
        <name>ATP</name>
        <dbReference type="ChEBI" id="CHEBI:30616"/>
    </ligand>
</feature>
<sequence length="591" mass="64982">MNQGKIITVSGPLVVASGMQEANIQDICRVGHLGLVGEIIEMRRDQASIQVYEETSGIGPGEPVVTTGCPLSVELGPGLISEMFDGIQRPLDRFQKATDSDFLIRGVAIPSLDRKAKWAFIPKLSVGQEVVAGDILGTVQETAVIEHRIMVPYKVSGTLVAIHAGDFTVTDTVYEIKQEDGSIYQGSLMQTWPVRQSRPVAQKLIPVEPLVTGQRVIDTFFPVTKGGAAAVPGPFGAGKTVVQHQIAKFANVDIVIYVGCGERGNEMTDVLNEFPELIDPNTGQSIMERTVLIANTSNMPVAAREASIYTGITIAEYFRDMGYSVAIMADSTSRWAEALREMSGRLQEMPGDEGYPAYLGSRIAEYYERAGRVRTLGSQEREGTITAIGAVSPPGGDISEPVTQNTLRIIKVFWGLDAPLAQRRHFPAINWLTSYSLYQDDVGSYIDRKQESNWSNKVTRAMAILQREASLEEIVRLVGLDSLSEQDRLTMAVARQIREDYLQQNAFDSVDTFTSFPKQEAMLTNILTFNEEASKALSLGAYFNEIMEGTAQVRDRIARSKFIPEENLEQIKGLTQKVTKEIHHVLAKGGI</sequence>
<comment type="function">
    <text evidence="1">Produces ATP from ADP in the presence of a proton gradient across the membrane. The V-type alpha chain is a catalytic subunit.</text>
</comment>
<comment type="catalytic activity">
    <reaction evidence="1">
        <text>ATP + H2O + 4 H(+)(in) = ADP + phosphate + 5 H(+)(out)</text>
        <dbReference type="Rhea" id="RHEA:57720"/>
        <dbReference type="ChEBI" id="CHEBI:15377"/>
        <dbReference type="ChEBI" id="CHEBI:15378"/>
        <dbReference type="ChEBI" id="CHEBI:30616"/>
        <dbReference type="ChEBI" id="CHEBI:43474"/>
        <dbReference type="ChEBI" id="CHEBI:456216"/>
        <dbReference type="EC" id="7.1.2.2"/>
    </reaction>
</comment>
<comment type="similarity">
    <text evidence="1">Belongs to the ATPase alpha/beta chains family.</text>
</comment>
<comment type="sequence caution" evidence="2">
    <conflict type="erroneous initiation">
        <sequence resource="EMBL-CDS" id="AAM78727"/>
    </conflict>
</comment>
<keyword id="KW-0066">ATP synthesis</keyword>
<keyword id="KW-0067">ATP-binding</keyword>
<keyword id="KW-0375">Hydrogen ion transport</keyword>
<keyword id="KW-0406">Ion transport</keyword>
<keyword id="KW-0547">Nucleotide-binding</keyword>
<keyword id="KW-1278">Translocase</keyword>
<keyword id="KW-0813">Transport</keyword>
<name>VATA_STRP3</name>
<proteinExistence type="inferred from homology"/>
<dbReference type="EC" id="7.1.2.2" evidence="1"/>
<dbReference type="EMBL" id="AE014074">
    <property type="protein sequence ID" value="AAM78727.1"/>
    <property type="status" value="ALT_INIT"/>
    <property type="molecule type" value="Genomic_DNA"/>
</dbReference>
<dbReference type="RefSeq" id="WP_011054135.1">
    <property type="nucleotide sequence ID" value="NC_004070.1"/>
</dbReference>
<dbReference type="SMR" id="P0DA06"/>
<dbReference type="KEGG" id="spg:SpyM3_0120"/>
<dbReference type="HOGENOM" id="CLU_008162_3_1_9"/>
<dbReference type="Proteomes" id="UP000000564">
    <property type="component" value="Chromosome"/>
</dbReference>
<dbReference type="GO" id="GO:0045259">
    <property type="term" value="C:proton-transporting ATP synthase complex"/>
    <property type="evidence" value="ECO:0007669"/>
    <property type="project" value="UniProtKB-ARBA"/>
</dbReference>
<dbReference type="GO" id="GO:0005524">
    <property type="term" value="F:ATP binding"/>
    <property type="evidence" value="ECO:0007669"/>
    <property type="project" value="UniProtKB-UniRule"/>
</dbReference>
<dbReference type="GO" id="GO:0046933">
    <property type="term" value="F:proton-transporting ATP synthase activity, rotational mechanism"/>
    <property type="evidence" value="ECO:0007669"/>
    <property type="project" value="UniProtKB-UniRule"/>
</dbReference>
<dbReference type="GO" id="GO:0046961">
    <property type="term" value="F:proton-transporting ATPase activity, rotational mechanism"/>
    <property type="evidence" value="ECO:0007669"/>
    <property type="project" value="InterPro"/>
</dbReference>
<dbReference type="GO" id="GO:0042777">
    <property type="term" value="P:proton motive force-driven plasma membrane ATP synthesis"/>
    <property type="evidence" value="ECO:0007669"/>
    <property type="project" value="UniProtKB-UniRule"/>
</dbReference>
<dbReference type="CDD" id="cd18111">
    <property type="entry name" value="ATP-synt_V_A-type_alpha_C"/>
    <property type="match status" value="1"/>
</dbReference>
<dbReference type="CDD" id="cd18119">
    <property type="entry name" value="ATP-synt_V_A-type_alpha_N"/>
    <property type="match status" value="1"/>
</dbReference>
<dbReference type="CDD" id="cd01134">
    <property type="entry name" value="V_A-ATPase_A"/>
    <property type="match status" value="1"/>
</dbReference>
<dbReference type="FunFam" id="3.40.50.300:FF:000675">
    <property type="entry name" value="V-type ATP synthase alpha chain"/>
    <property type="match status" value="1"/>
</dbReference>
<dbReference type="FunFam" id="2.40.30.20:FF:000002">
    <property type="entry name" value="V-type proton ATPase catalytic subunit A"/>
    <property type="match status" value="1"/>
</dbReference>
<dbReference type="FunFam" id="2.40.50.100:FF:000008">
    <property type="entry name" value="V-type proton ATPase catalytic subunit A"/>
    <property type="match status" value="1"/>
</dbReference>
<dbReference type="Gene3D" id="2.40.30.20">
    <property type="match status" value="1"/>
</dbReference>
<dbReference type="Gene3D" id="2.40.50.100">
    <property type="match status" value="1"/>
</dbReference>
<dbReference type="Gene3D" id="1.10.1140.10">
    <property type="entry name" value="Bovine Mitochondrial F1-atpase, Atp Synthase Beta Chain, Chain D, domain 3"/>
    <property type="match status" value="1"/>
</dbReference>
<dbReference type="Gene3D" id="3.40.50.300">
    <property type="entry name" value="P-loop containing nucleotide triphosphate hydrolases"/>
    <property type="match status" value="1"/>
</dbReference>
<dbReference type="HAMAP" id="MF_00309">
    <property type="entry name" value="ATP_synth_A_arch"/>
    <property type="match status" value="1"/>
</dbReference>
<dbReference type="InterPro" id="IPR055190">
    <property type="entry name" value="ATP-synt_VA_C"/>
</dbReference>
<dbReference type="InterPro" id="IPR031686">
    <property type="entry name" value="ATP-synth_a_Xtn"/>
</dbReference>
<dbReference type="InterPro" id="IPR023366">
    <property type="entry name" value="ATP_synth_asu-like_sf"/>
</dbReference>
<dbReference type="InterPro" id="IPR020003">
    <property type="entry name" value="ATPase_a/bsu_AS"/>
</dbReference>
<dbReference type="InterPro" id="IPR004100">
    <property type="entry name" value="ATPase_F1/V1/A1_a/bsu_N"/>
</dbReference>
<dbReference type="InterPro" id="IPR036121">
    <property type="entry name" value="ATPase_F1/V1/A1_a/bsu_N_sf"/>
</dbReference>
<dbReference type="InterPro" id="IPR000194">
    <property type="entry name" value="ATPase_F1/V1/A1_a/bsu_nucl-bd"/>
</dbReference>
<dbReference type="InterPro" id="IPR024034">
    <property type="entry name" value="ATPase_F1/V1_b/a_C"/>
</dbReference>
<dbReference type="InterPro" id="IPR027417">
    <property type="entry name" value="P-loop_NTPase"/>
</dbReference>
<dbReference type="InterPro" id="IPR022878">
    <property type="entry name" value="V-ATPase_asu"/>
</dbReference>
<dbReference type="NCBIfam" id="NF003220">
    <property type="entry name" value="PRK04192.1"/>
    <property type="match status" value="1"/>
</dbReference>
<dbReference type="PANTHER" id="PTHR43607:SF1">
    <property type="entry name" value="H(+)-TRANSPORTING TWO-SECTOR ATPASE"/>
    <property type="match status" value="1"/>
</dbReference>
<dbReference type="PANTHER" id="PTHR43607">
    <property type="entry name" value="V-TYPE PROTON ATPASE CATALYTIC SUBUNIT A"/>
    <property type="match status" value="1"/>
</dbReference>
<dbReference type="Pfam" id="PF00006">
    <property type="entry name" value="ATP-synt_ab"/>
    <property type="match status" value="1"/>
</dbReference>
<dbReference type="Pfam" id="PF02874">
    <property type="entry name" value="ATP-synt_ab_N"/>
    <property type="match status" value="1"/>
</dbReference>
<dbReference type="Pfam" id="PF16886">
    <property type="entry name" value="ATP-synt_ab_Xtn"/>
    <property type="match status" value="1"/>
</dbReference>
<dbReference type="Pfam" id="PF22919">
    <property type="entry name" value="ATP-synt_VA_C"/>
    <property type="match status" value="1"/>
</dbReference>
<dbReference type="SUPFAM" id="SSF47917">
    <property type="entry name" value="C-terminal domain of alpha and beta subunits of F1 ATP synthase"/>
    <property type="match status" value="1"/>
</dbReference>
<dbReference type="SUPFAM" id="SSF50615">
    <property type="entry name" value="N-terminal domain of alpha and beta subunits of F1 ATP synthase"/>
    <property type="match status" value="1"/>
</dbReference>
<dbReference type="SUPFAM" id="SSF52540">
    <property type="entry name" value="P-loop containing nucleoside triphosphate hydrolases"/>
    <property type="match status" value="1"/>
</dbReference>
<dbReference type="PROSITE" id="PS00152">
    <property type="entry name" value="ATPASE_ALPHA_BETA"/>
    <property type="match status" value="1"/>
</dbReference>
<organism>
    <name type="scientific">Streptococcus pyogenes serotype M3 (strain ATCC BAA-595 / MGAS315)</name>
    <dbReference type="NCBI Taxonomy" id="198466"/>
    <lineage>
        <taxon>Bacteria</taxon>
        <taxon>Bacillati</taxon>
        <taxon>Bacillota</taxon>
        <taxon>Bacilli</taxon>
        <taxon>Lactobacillales</taxon>
        <taxon>Streptococcaceae</taxon>
        <taxon>Streptococcus</taxon>
    </lineage>
</organism>
<gene>
    <name evidence="1" type="primary">atpA</name>
    <name type="synonym">ntpA</name>
    <name type="ordered locus">SpyM3_0120</name>
</gene>
<evidence type="ECO:0000255" key="1">
    <source>
        <dbReference type="HAMAP-Rule" id="MF_00309"/>
    </source>
</evidence>
<evidence type="ECO:0000305" key="2"/>